<evidence type="ECO:0000250" key="1"/>
<evidence type="ECO:0000305" key="2"/>
<name>Y756_MYCTO</name>
<accession>P9WFI4</accession>
<accession>L0T4P9</accession>
<accession>Q7ARS3</accession>
<accession>Q7D9D6</accession>
<feature type="chain" id="PRO_0000428533" description="Putative S-adenosyl-L-methionine-dependent methyltransferase MT0756">
    <location>
        <begin position="1"/>
        <end position="318"/>
    </location>
</feature>
<feature type="binding site" evidence="1">
    <location>
        <position position="135"/>
    </location>
    <ligand>
        <name>S-adenosyl-L-methionine</name>
        <dbReference type="ChEBI" id="CHEBI:59789"/>
    </ligand>
</feature>
<feature type="binding site" evidence="1">
    <location>
        <begin position="164"/>
        <end position="165"/>
    </location>
    <ligand>
        <name>S-adenosyl-L-methionine</name>
        <dbReference type="ChEBI" id="CHEBI:59789"/>
    </ligand>
</feature>
<comment type="function">
    <text evidence="1">Exhibits S-adenosyl-L-methionine-dependent methyltransferase activity.</text>
</comment>
<comment type="similarity">
    <text evidence="2">Belongs to the UPF0677 family.</text>
</comment>
<sequence>MTQTGSARFEGDSWDLASSVGLTATMVAAARAVAGRAPGALVNDQFAEPLVRAVGVDFFVRMASGELDPDELAEDEANGLRRFADAMAIRTHYFDNFFLDATRAGIRQAVILASGLDSRAYRLRWPAGTIVFEVDQPQVIDFKTTTLAGLGAAPTTDRRTVAVDLRDDWPTALQKAGFDNAQRTAWIAEGLLGYLSAEAQDRLLDQITAQSVPGSQFATEVLRDINRLNEEELRGRMRRLAERFRRHGLDLDMSGLVYFGDRTDARTYLADHGWRTASASTTDLLAEHGLPPIDGDDAPFGEVIYVSAELKQKHQDTR</sequence>
<dbReference type="EC" id="2.1.1.-"/>
<dbReference type="EMBL" id="AE000516">
    <property type="protein sequence ID" value="AAK44989.1"/>
    <property type="molecule type" value="Genomic_DNA"/>
</dbReference>
<dbReference type="RefSeq" id="WP_003403717.1">
    <property type="nucleotide sequence ID" value="NZ_KK341227.1"/>
</dbReference>
<dbReference type="SMR" id="P9WFI4"/>
<dbReference type="KEGG" id="mtc:MT0756"/>
<dbReference type="PATRIC" id="fig|83331.31.peg.809"/>
<dbReference type="HOGENOM" id="CLU_056160_2_1_11"/>
<dbReference type="Proteomes" id="UP000001020">
    <property type="component" value="Chromosome"/>
</dbReference>
<dbReference type="GO" id="GO:0008168">
    <property type="term" value="F:methyltransferase activity"/>
    <property type="evidence" value="ECO:0007669"/>
    <property type="project" value="UniProtKB-KW"/>
</dbReference>
<dbReference type="GO" id="GO:0032259">
    <property type="term" value="P:methylation"/>
    <property type="evidence" value="ECO:0007669"/>
    <property type="project" value="UniProtKB-KW"/>
</dbReference>
<dbReference type="Gene3D" id="3.40.50.150">
    <property type="entry name" value="Vaccinia Virus protein VP39"/>
    <property type="match status" value="1"/>
</dbReference>
<dbReference type="InterPro" id="IPR007213">
    <property type="entry name" value="Ppm1/Ppm2/Tcmp"/>
</dbReference>
<dbReference type="InterPro" id="IPR029063">
    <property type="entry name" value="SAM-dependent_MTases_sf"/>
</dbReference>
<dbReference type="InterPro" id="IPR011610">
    <property type="entry name" value="SAM_mthyl_Trfase_ML2640-like"/>
</dbReference>
<dbReference type="NCBIfam" id="TIGR00027">
    <property type="entry name" value="mthyl_TIGR00027"/>
    <property type="match status" value="1"/>
</dbReference>
<dbReference type="PANTHER" id="PTHR43619">
    <property type="entry name" value="S-ADENOSYL-L-METHIONINE-DEPENDENT METHYLTRANSFERASE YKTD-RELATED"/>
    <property type="match status" value="1"/>
</dbReference>
<dbReference type="PANTHER" id="PTHR43619:SF2">
    <property type="entry name" value="S-ADENOSYL-L-METHIONINE-DEPENDENT METHYLTRANSFERASES SUPERFAMILY PROTEIN"/>
    <property type="match status" value="1"/>
</dbReference>
<dbReference type="Pfam" id="PF04072">
    <property type="entry name" value="LCM"/>
    <property type="match status" value="1"/>
</dbReference>
<dbReference type="SUPFAM" id="SSF53335">
    <property type="entry name" value="S-adenosyl-L-methionine-dependent methyltransferases"/>
    <property type="match status" value="1"/>
</dbReference>
<proteinExistence type="inferred from homology"/>
<keyword id="KW-0489">Methyltransferase</keyword>
<keyword id="KW-1185">Reference proteome</keyword>
<keyword id="KW-0949">S-adenosyl-L-methionine</keyword>
<keyword id="KW-0808">Transferase</keyword>
<protein>
    <recommendedName>
        <fullName>Putative S-adenosyl-L-methionine-dependent methyltransferase MT0756</fullName>
        <ecNumber>2.1.1.-</ecNumber>
    </recommendedName>
</protein>
<gene>
    <name type="ordered locus">MT0756</name>
</gene>
<reference key="1">
    <citation type="journal article" date="2002" name="J. Bacteriol.">
        <title>Whole-genome comparison of Mycobacterium tuberculosis clinical and laboratory strains.</title>
        <authorList>
            <person name="Fleischmann R.D."/>
            <person name="Alland D."/>
            <person name="Eisen J.A."/>
            <person name="Carpenter L."/>
            <person name="White O."/>
            <person name="Peterson J.D."/>
            <person name="DeBoy R.T."/>
            <person name="Dodson R.J."/>
            <person name="Gwinn M.L."/>
            <person name="Haft D.H."/>
            <person name="Hickey E.K."/>
            <person name="Kolonay J.F."/>
            <person name="Nelson W.C."/>
            <person name="Umayam L.A."/>
            <person name="Ermolaeva M.D."/>
            <person name="Salzberg S.L."/>
            <person name="Delcher A."/>
            <person name="Utterback T.R."/>
            <person name="Weidman J.F."/>
            <person name="Khouri H.M."/>
            <person name="Gill J."/>
            <person name="Mikula A."/>
            <person name="Bishai W."/>
            <person name="Jacobs W.R. Jr."/>
            <person name="Venter J.C."/>
            <person name="Fraser C.M."/>
        </authorList>
    </citation>
    <scope>NUCLEOTIDE SEQUENCE [LARGE SCALE GENOMIC DNA]</scope>
    <source>
        <strain>CDC 1551 / Oshkosh</strain>
    </source>
</reference>
<organism>
    <name type="scientific">Mycobacterium tuberculosis (strain CDC 1551 / Oshkosh)</name>
    <dbReference type="NCBI Taxonomy" id="83331"/>
    <lineage>
        <taxon>Bacteria</taxon>
        <taxon>Bacillati</taxon>
        <taxon>Actinomycetota</taxon>
        <taxon>Actinomycetes</taxon>
        <taxon>Mycobacteriales</taxon>
        <taxon>Mycobacteriaceae</taxon>
        <taxon>Mycobacterium</taxon>
        <taxon>Mycobacterium tuberculosis complex</taxon>
    </lineage>
</organism>